<reference key="1">
    <citation type="journal article" date="1996" name="Mol. Plant Microbe Interact.">
        <title>Cloning of a pectate lyase gene from Xanthomonas campestris pv. malvacearum and comparison of its sequence relationship with pel genes of soft-rot Erwinia and Pseudomonas.</title>
        <authorList>
            <person name="Liao C.H."/>
            <person name="Gaffney T.D."/>
            <person name="Bradley S.P."/>
            <person name="Wong L.C."/>
        </authorList>
    </citation>
    <scope>NUCLEOTIDE SEQUENCE [GENOMIC DNA]</scope>
    <source>
        <strain>CY091 / Biovar 2</strain>
    </source>
</reference>
<accession>Q59671</accession>
<accession>Q51784</accession>
<sequence>MTNPSTFTASKLASAVIGALLLSSVPAHAADIWLDSATTGWATQNGGTKGGSRAAANNIYTAKNAAELKTALKASVGANGRIIKITGIIDISEGKAYTTTADMKVRGRLDIPGKTTIVGTTSNAEIREGFLYAKENDVIIRNITIENPWDPEPKWDPTDGSAGNWNSEYDGLTIEGANNVWVDHVTFTDGRRTDDQNGTANGRPKQHHDGALDVKNGANYVTISYSAFKSHEKNNLIGSSDSRTTDDGKLKVTIHNTLFENISARAPRVRFGQVHLYNNYHVGSTSHKVYPFSYAHGMGKNSKIFSERNAFEISGISGCDKIAGDYGGNVYRDTGSTVNGTALTCPWSTNIGWTPPYSYTPLAADKVAADVKAKAGAGKL</sequence>
<name>PLY_PSEFL</name>
<comment type="function">
    <text>Plays a role in bacterial invasion of plants.</text>
</comment>
<comment type="catalytic activity">
    <reaction>
        <text>Eliminative cleavage of (1-&gt;4)-alpha-D-galacturonan to give oligosaccharides with 4-deoxy-alpha-D-galact-4-enuronosyl groups at their non-reducing ends.</text>
        <dbReference type="EC" id="4.2.2.2"/>
    </reaction>
</comment>
<comment type="cofactor">
    <cofactor evidence="1">
        <name>Ca(2+)</name>
        <dbReference type="ChEBI" id="CHEBI:29108"/>
    </cofactor>
    <text evidence="1">Binds 1 Ca(2+) ion per subunit.</text>
</comment>
<comment type="pathway">
    <text>Glycan metabolism; pectin degradation; 2-dehydro-3-deoxy-D-gluconate from pectin: step 2/5.</text>
</comment>
<comment type="subcellular location">
    <subcellularLocation>
        <location>Secreted</location>
    </subcellularLocation>
</comment>
<comment type="similarity">
    <text evidence="4">Belongs to the polysaccharide lyase 1 family.</text>
</comment>
<keyword id="KW-0106">Calcium</keyword>
<keyword id="KW-0456">Lyase</keyword>
<keyword id="KW-0479">Metal-binding</keyword>
<keyword id="KW-0964">Secreted</keyword>
<keyword id="KW-0732">Signal</keyword>
<feature type="signal peptide" evidence="2">
    <location>
        <begin position="1"/>
        <end position="28"/>
    </location>
</feature>
<feature type="chain" id="PRO_0000024860" description="Pectate lyase">
    <location>
        <begin position="29"/>
        <end position="380"/>
    </location>
</feature>
<feature type="region of interest" description="Disordered" evidence="3">
    <location>
        <begin position="191"/>
        <end position="210"/>
    </location>
</feature>
<feature type="active site" evidence="2">
    <location>
        <position position="265"/>
    </location>
</feature>
<feature type="binding site" evidence="1">
    <location>
        <position position="170"/>
    </location>
    <ligand>
        <name>Ca(2+)</name>
        <dbReference type="ChEBI" id="CHEBI:29108"/>
    </ligand>
</feature>
<feature type="binding site" evidence="1">
    <location>
        <position position="209"/>
    </location>
    <ligand>
        <name>Ca(2+)</name>
        <dbReference type="ChEBI" id="CHEBI:29108"/>
    </ligand>
</feature>
<feature type="binding site" evidence="1">
    <location>
        <position position="213"/>
    </location>
    <ligand>
        <name>Ca(2+)</name>
        <dbReference type="ChEBI" id="CHEBI:29108"/>
    </ligand>
</feature>
<organism>
    <name type="scientific">Pseudomonas fluorescens</name>
    <dbReference type="NCBI Taxonomy" id="294"/>
    <lineage>
        <taxon>Bacteria</taxon>
        <taxon>Pseudomonadati</taxon>
        <taxon>Pseudomonadota</taxon>
        <taxon>Gammaproteobacteria</taxon>
        <taxon>Pseudomonadales</taxon>
        <taxon>Pseudomonadaceae</taxon>
        <taxon>Pseudomonas</taxon>
    </lineage>
</organism>
<protein>
    <recommendedName>
        <fullName>Pectate lyase</fullName>
        <shortName>PL</shortName>
        <ecNumber>4.2.2.2</ecNumber>
    </recommendedName>
</protein>
<gene>
    <name type="primary">pel</name>
</gene>
<proteinExistence type="inferred from homology"/>
<dbReference type="EC" id="4.2.2.2"/>
<dbReference type="EMBL" id="L38902">
    <property type="protein sequence ID" value="AAB46399.1"/>
    <property type="molecule type" value="Genomic_DNA"/>
</dbReference>
<dbReference type="EMBL" id="L41673">
    <property type="protein sequence ID" value="AAA93535.1"/>
    <property type="molecule type" value="Genomic_DNA"/>
</dbReference>
<dbReference type="SMR" id="Q59671"/>
<dbReference type="CAZy" id="PL1">
    <property type="family name" value="Polysaccharide Lyase Family 1"/>
</dbReference>
<dbReference type="UniPathway" id="UPA00545">
    <property type="reaction ID" value="UER00824"/>
</dbReference>
<dbReference type="GO" id="GO:0005576">
    <property type="term" value="C:extracellular region"/>
    <property type="evidence" value="ECO:0007669"/>
    <property type="project" value="UniProtKB-SubCell"/>
</dbReference>
<dbReference type="GO" id="GO:0046872">
    <property type="term" value="F:metal ion binding"/>
    <property type="evidence" value="ECO:0007669"/>
    <property type="project" value="UniProtKB-KW"/>
</dbReference>
<dbReference type="GO" id="GO:0030570">
    <property type="term" value="F:pectate lyase activity"/>
    <property type="evidence" value="ECO:0007669"/>
    <property type="project" value="UniProtKB-EC"/>
</dbReference>
<dbReference type="GO" id="GO:0045490">
    <property type="term" value="P:pectin catabolic process"/>
    <property type="evidence" value="ECO:0007669"/>
    <property type="project" value="UniProtKB-UniPathway"/>
</dbReference>
<dbReference type="Gene3D" id="2.160.20.10">
    <property type="entry name" value="Single-stranded right-handed beta-helix, Pectin lyase-like"/>
    <property type="match status" value="1"/>
</dbReference>
<dbReference type="InterPro" id="IPR002022">
    <property type="entry name" value="Pec_lyase"/>
</dbReference>
<dbReference type="InterPro" id="IPR012334">
    <property type="entry name" value="Pectin_lyas_fold"/>
</dbReference>
<dbReference type="InterPro" id="IPR011050">
    <property type="entry name" value="Pectin_lyase_fold/virulence"/>
</dbReference>
<dbReference type="InterPro" id="IPR045032">
    <property type="entry name" value="PEL"/>
</dbReference>
<dbReference type="PANTHER" id="PTHR31683">
    <property type="entry name" value="PECTATE LYASE 18-RELATED"/>
    <property type="match status" value="1"/>
</dbReference>
<dbReference type="PANTHER" id="PTHR31683:SF18">
    <property type="entry name" value="PECTATE LYASE 21-RELATED"/>
    <property type="match status" value="1"/>
</dbReference>
<dbReference type="Pfam" id="PF00544">
    <property type="entry name" value="Pectate_lyase_4"/>
    <property type="match status" value="1"/>
</dbReference>
<dbReference type="SMART" id="SM00656">
    <property type="entry name" value="Amb_all"/>
    <property type="match status" value="1"/>
</dbReference>
<dbReference type="SUPFAM" id="SSF51126">
    <property type="entry name" value="Pectin lyase-like"/>
    <property type="match status" value="1"/>
</dbReference>
<evidence type="ECO:0000250" key="1"/>
<evidence type="ECO:0000255" key="2"/>
<evidence type="ECO:0000256" key="3">
    <source>
        <dbReference type="SAM" id="MobiDB-lite"/>
    </source>
</evidence>
<evidence type="ECO:0000305" key="4"/>